<feature type="chain" id="PRO_0000123776" description="Mid1-interacting protein 1A">
    <location>
        <begin position="1"/>
        <end position="152"/>
    </location>
</feature>
<feature type="region of interest" description="Disordered" evidence="2">
    <location>
        <begin position="87"/>
        <end position="109"/>
    </location>
</feature>
<feature type="compositionally biased region" description="Basic and acidic residues" evidence="2">
    <location>
        <begin position="87"/>
        <end position="105"/>
    </location>
</feature>
<protein>
    <recommendedName>
        <fullName>Mid1-interacting protein 1A</fullName>
    </recommendedName>
    <alternativeName>
        <fullName>Gastrulation-specific protein G12</fullName>
    </alternativeName>
</protein>
<name>M1I1A_DANRE</name>
<evidence type="ECO:0000250" key="1"/>
<evidence type="ECO:0000256" key="2">
    <source>
        <dbReference type="SAM" id="MobiDB-lite"/>
    </source>
</evidence>
<evidence type="ECO:0000269" key="3">
    <source>
    </source>
</evidence>
<evidence type="ECO:0000305" key="4"/>
<gene>
    <name type="primary">mid1ip1a</name>
    <name type="synonym">g12</name>
</gene>
<comment type="function">
    <text evidence="1">Involved in stabilization of microtubules. May play a role in the regulation of lipogenesis (By similarity).</text>
</comment>
<comment type="subcellular location">
    <subcellularLocation>
        <location evidence="1">Nucleus</location>
    </subcellularLocation>
    <subcellularLocation>
        <location evidence="1">Cytoplasm</location>
    </subcellularLocation>
    <subcellularLocation>
        <location evidence="1">Cytoplasm</location>
        <location evidence="1">Cytoskeleton</location>
    </subcellularLocation>
    <text evidence="1">Associated with microtubules.</text>
</comment>
<comment type="tissue specificity">
    <text evidence="3">Expressed for a short period in the cells that will produce the enveloping layer (EVL).</text>
</comment>
<comment type="developmental stage">
    <text evidence="3">Gastrulation specific.</text>
</comment>
<comment type="similarity">
    <text evidence="4">Belongs to the SPOT14 family.</text>
</comment>
<keyword id="KW-0963">Cytoplasm</keyword>
<keyword id="KW-0206">Cytoskeleton</keyword>
<keyword id="KW-0493">Microtubule</keyword>
<keyword id="KW-0539">Nucleus</keyword>
<keyword id="KW-1185">Reference proteome</keyword>
<proteinExistence type="evidence at transcript level"/>
<accession>P47805</accession>
<sequence>MQMSEPLSQKNALYTAMNRFLGAVNNMDQTVMVPSLLRDVPLDQEKEQQKLTNDPGSYLREAEADMYSYYSQLKSIRNNIEWGVIRSEDQRRKKDTSASEPVRTEEESDMDLEQLLQFHLKGLHGVLSQLTSQANNLTNRYKQEIGISGWGQ</sequence>
<reference key="1">
    <citation type="journal article" date="1995" name="Mech. Dev.">
        <title>A novel gene expressed during zebrafish gastrulation identified by differential RNA display.</title>
        <authorList>
            <person name="Conway G."/>
        </authorList>
    </citation>
    <scope>NUCLEOTIDE SEQUENCE [MRNA]</scope>
    <scope>TISSUE SPECIFICITY</scope>
    <scope>DEVELOPMENTAL STAGE</scope>
    <source>
        <tissue>Gastrula</tissue>
    </source>
</reference>
<reference key="2">
    <citation type="submission" date="2004-06" db="EMBL/GenBank/DDBJ databases">
        <authorList>
            <consortium name="NIH - Zebrafish Gene Collection (ZGC) project"/>
        </authorList>
    </citation>
    <scope>NUCLEOTIDE SEQUENCE [LARGE SCALE MRNA]</scope>
</reference>
<dbReference type="EMBL" id="U27121">
    <property type="protein sequence ID" value="AAA96952.1"/>
    <property type="molecule type" value="mRNA"/>
</dbReference>
<dbReference type="EMBL" id="BC074084">
    <property type="protein sequence ID" value="AAH74084.1"/>
    <property type="molecule type" value="mRNA"/>
</dbReference>
<dbReference type="RefSeq" id="NP_571410.1">
    <property type="nucleotide sequence ID" value="NM_131335.1"/>
</dbReference>
<dbReference type="SMR" id="P47805"/>
<dbReference type="FunCoup" id="P47805">
    <property type="interactions" value="1"/>
</dbReference>
<dbReference type="STRING" id="7955.ENSDARP00000060149"/>
<dbReference type="PaxDb" id="7955-ENSDARP00000060149"/>
<dbReference type="Ensembl" id="ENSDART00000060150">
    <property type="protein sequence ID" value="ENSDARP00000060149"/>
    <property type="gene ID" value="ENSDARG00000041051"/>
</dbReference>
<dbReference type="GeneID" id="30600"/>
<dbReference type="KEGG" id="dre:30600"/>
<dbReference type="AGR" id="ZFIN:ZDB-GENE-990415-81"/>
<dbReference type="CTD" id="30600"/>
<dbReference type="ZFIN" id="ZDB-GENE-990415-81">
    <property type="gene designation" value="mid1ip1a"/>
</dbReference>
<dbReference type="HOGENOM" id="CLU_066079_1_0_1"/>
<dbReference type="InParanoid" id="P47805"/>
<dbReference type="OMA" id="QQANCLT"/>
<dbReference type="OrthoDB" id="5951908at2759"/>
<dbReference type="PhylomeDB" id="P47805"/>
<dbReference type="TreeFam" id="TF326826"/>
<dbReference type="Reactome" id="R-DRE-200425">
    <property type="pathway name" value="Carnitine shuttle"/>
</dbReference>
<dbReference type="PRO" id="PR:P47805"/>
<dbReference type="Proteomes" id="UP000000437">
    <property type="component" value="Chromosome 9"/>
</dbReference>
<dbReference type="Bgee" id="ENSDARG00000041051">
    <property type="expression patterns" value="Expressed in caudal fin and 23 other cell types or tissues"/>
</dbReference>
<dbReference type="ExpressionAtlas" id="P47805">
    <property type="expression patterns" value="baseline and differential"/>
</dbReference>
<dbReference type="GO" id="GO:0005829">
    <property type="term" value="C:cytosol"/>
    <property type="evidence" value="ECO:0000318"/>
    <property type="project" value="GO_Central"/>
</dbReference>
<dbReference type="GO" id="GO:0005874">
    <property type="term" value="C:microtubule"/>
    <property type="evidence" value="ECO:0007669"/>
    <property type="project" value="UniProtKB-KW"/>
</dbReference>
<dbReference type="GO" id="GO:0005634">
    <property type="term" value="C:nucleus"/>
    <property type="evidence" value="ECO:0007669"/>
    <property type="project" value="UniProtKB-SubCell"/>
</dbReference>
<dbReference type="GO" id="GO:0046890">
    <property type="term" value="P:regulation of lipid biosynthetic process"/>
    <property type="evidence" value="ECO:0000318"/>
    <property type="project" value="GO_Central"/>
</dbReference>
<dbReference type="Gene3D" id="6.10.140.1610">
    <property type="match status" value="1"/>
</dbReference>
<dbReference type="InterPro" id="IPR053719">
    <property type="entry name" value="Lipogen_MT_Stabilize_sf"/>
</dbReference>
<dbReference type="InterPro" id="IPR009786">
    <property type="entry name" value="Spot_14"/>
</dbReference>
<dbReference type="PANTHER" id="PTHR14315:SF19">
    <property type="entry name" value="MID1-INTERACTING PROTEIN 1-B-RELATED"/>
    <property type="match status" value="1"/>
</dbReference>
<dbReference type="PANTHER" id="PTHR14315">
    <property type="entry name" value="SPOT14 FAMILY MEMBER"/>
    <property type="match status" value="1"/>
</dbReference>
<dbReference type="Pfam" id="PF07084">
    <property type="entry name" value="Spot_14"/>
    <property type="match status" value="1"/>
</dbReference>
<organism>
    <name type="scientific">Danio rerio</name>
    <name type="common">Zebrafish</name>
    <name type="synonym">Brachydanio rerio</name>
    <dbReference type="NCBI Taxonomy" id="7955"/>
    <lineage>
        <taxon>Eukaryota</taxon>
        <taxon>Metazoa</taxon>
        <taxon>Chordata</taxon>
        <taxon>Craniata</taxon>
        <taxon>Vertebrata</taxon>
        <taxon>Euteleostomi</taxon>
        <taxon>Actinopterygii</taxon>
        <taxon>Neopterygii</taxon>
        <taxon>Teleostei</taxon>
        <taxon>Ostariophysi</taxon>
        <taxon>Cypriniformes</taxon>
        <taxon>Danionidae</taxon>
        <taxon>Danioninae</taxon>
        <taxon>Danio</taxon>
    </lineage>
</organism>